<organismHost>
    <name type="scientific">Aves</name>
    <dbReference type="NCBI Taxonomy" id="8782"/>
</organismHost>
<organismHost>
    <name type="scientific">Homo sapiens</name>
    <name type="common">Human</name>
    <dbReference type="NCBI Taxonomy" id="9606"/>
</organismHost>
<feature type="chain" id="PRO_0000279616" description="RNA-directed RNA polymerase catalytic subunit">
    <location>
        <begin position="1"/>
        <end position="757"/>
    </location>
</feature>
<feature type="domain" description="RdRp catalytic" evidence="1">
    <location>
        <begin position="286"/>
        <end position="483"/>
    </location>
</feature>
<feature type="region of interest" description="Disordered" evidence="2">
    <location>
        <begin position="52"/>
        <end position="82"/>
    </location>
</feature>
<feature type="region of interest" description="Promoter-binding site" evidence="1">
    <location>
        <begin position="249"/>
        <end position="256"/>
    </location>
</feature>
<feature type="short sequence motif" description="Nuclear localization signal" evidence="1">
    <location>
        <begin position="187"/>
        <end position="195"/>
    </location>
</feature>
<feature type="short sequence motif" description="Nuclear localization signal" evidence="1">
    <location>
        <begin position="203"/>
        <end position="216"/>
    </location>
</feature>
<feature type="compositionally biased region" description="Polar residues" evidence="2">
    <location>
        <begin position="55"/>
        <end position="64"/>
    </location>
</feature>
<protein>
    <recommendedName>
        <fullName evidence="1">RNA-directed RNA polymerase catalytic subunit</fullName>
        <ecNumber evidence="1">2.7.7.48</ecNumber>
    </recommendedName>
    <alternativeName>
        <fullName evidence="1">Polymerase basic protein 1</fullName>
        <shortName evidence="1">PB1</shortName>
    </alternativeName>
    <alternativeName>
        <fullName evidence="1">RNA-directed RNA polymerase subunit P1</fullName>
    </alternativeName>
</protein>
<reference key="1">
    <citation type="journal article" date="2004" name="Virology">
        <title>Genetic analysis of human H2N2 and early H3N2 influenza viruses, 1957-1972: evidence for genetic divergence and multiple reassortment events.</title>
        <authorList>
            <person name="Lindstrom S.E."/>
            <person name="Cox N.J."/>
            <person name="Klimov A."/>
        </authorList>
    </citation>
    <scope>NUCLEOTIDE SEQUENCE [GENOMIC RNA]</scope>
</reference>
<dbReference type="EC" id="2.7.7.48" evidence="1"/>
<dbReference type="EMBL" id="AY210023">
    <property type="protein sequence ID" value="AAO46339.1"/>
    <property type="molecule type" value="Genomic_RNA"/>
</dbReference>
<dbReference type="SMR" id="Q6XU19"/>
<dbReference type="GO" id="GO:0030430">
    <property type="term" value="C:host cell cytoplasm"/>
    <property type="evidence" value="ECO:0007669"/>
    <property type="project" value="UniProtKB-SubCell"/>
</dbReference>
<dbReference type="GO" id="GO:0042025">
    <property type="term" value="C:host cell nucleus"/>
    <property type="evidence" value="ECO:0007669"/>
    <property type="project" value="UniProtKB-SubCell"/>
</dbReference>
<dbReference type="GO" id="GO:0000166">
    <property type="term" value="F:nucleotide binding"/>
    <property type="evidence" value="ECO:0007669"/>
    <property type="project" value="UniProtKB-UniRule"/>
</dbReference>
<dbReference type="GO" id="GO:0003723">
    <property type="term" value="F:RNA binding"/>
    <property type="evidence" value="ECO:0007669"/>
    <property type="project" value="InterPro"/>
</dbReference>
<dbReference type="GO" id="GO:0003968">
    <property type="term" value="F:RNA-directed RNA polymerase activity"/>
    <property type="evidence" value="ECO:0007669"/>
    <property type="project" value="UniProtKB-UniRule"/>
</dbReference>
<dbReference type="GO" id="GO:0006351">
    <property type="term" value="P:DNA-templated transcription"/>
    <property type="evidence" value="ECO:0007669"/>
    <property type="project" value="UniProtKB-UniRule"/>
</dbReference>
<dbReference type="GO" id="GO:0039657">
    <property type="term" value="P:symbiont-mediated suppression of host gene expression"/>
    <property type="evidence" value="ECO:0007669"/>
    <property type="project" value="UniProtKB-KW"/>
</dbReference>
<dbReference type="GO" id="GO:0039523">
    <property type="term" value="P:symbiont-mediated suppression of host mRNA transcription via inhibition of RNA polymerase II activity"/>
    <property type="evidence" value="ECO:0007669"/>
    <property type="project" value="UniProtKB-UniRule"/>
</dbReference>
<dbReference type="GO" id="GO:0039694">
    <property type="term" value="P:viral RNA genome replication"/>
    <property type="evidence" value="ECO:0007669"/>
    <property type="project" value="UniProtKB-UniRule"/>
</dbReference>
<dbReference type="GO" id="GO:0019083">
    <property type="term" value="P:viral transcription"/>
    <property type="evidence" value="ECO:0007669"/>
    <property type="project" value="UniProtKB-KW"/>
</dbReference>
<dbReference type="Gene3D" id="6.10.140.720">
    <property type="match status" value="1"/>
</dbReference>
<dbReference type="HAMAP" id="MF_04065">
    <property type="entry name" value="INFV_RDRP"/>
    <property type="match status" value="1"/>
</dbReference>
<dbReference type="InterPro" id="IPR007099">
    <property type="entry name" value="RNA-dir_pol_NSvirus"/>
</dbReference>
<dbReference type="InterPro" id="IPR001407">
    <property type="entry name" value="RNA_pol_PB1_influenza"/>
</dbReference>
<dbReference type="Pfam" id="PF00602">
    <property type="entry name" value="Flu_PB1"/>
    <property type="match status" value="1"/>
</dbReference>
<dbReference type="PIRSF" id="PIRSF000827">
    <property type="entry name" value="RdRPol_OMV"/>
    <property type="match status" value="1"/>
</dbReference>
<dbReference type="PROSITE" id="PS50525">
    <property type="entry name" value="RDRP_SSRNA_NEG_SEG"/>
    <property type="match status" value="1"/>
</dbReference>
<accession>Q6XU19</accession>
<organism>
    <name type="scientific">Influenza A virus (strain A/Tokyo/3/1967 H2N2)</name>
    <dbReference type="NCBI Taxonomy" id="380960"/>
    <lineage>
        <taxon>Viruses</taxon>
        <taxon>Riboviria</taxon>
        <taxon>Orthornavirae</taxon>
        <taxon>Negarnaviricota</taxon>
        <taxon>Polyploviricotina</taxon>
        <taxon>Insthoviricetes</taxon>
        <taxon>Articulavirales</taxon>
        <taxon>Orthomyxoviridae</taxon>
        <taxon>Alphainfluenzavirus</taxon>
        <taxon>Alphainfluenzavirus influenzae</taxon>
        <taxon>Influenza A virus</taxon>
    </lineage>
</organism>
<sequence length="757" mass="86411">MDVNPTLLFLKVPAQNAISTTFPYTGDPPYSHGTGTGYTMDTVNRTHQYSERGKWTTNTETGAPQLNPIDGPLPEDNEPSGYAQTDCVLEAMAFLEESHPGIFENSCLETMEVIQQTRVDKLTQGRQTYDWTLNRNQPAATALANTIEVFRSNGLTANESGRLIDFLKDVIESMDKEEMEIITHFQRKRRVRDNMTKKMVTQRTIGKKKQRLNKRSYLIRALTLNTMTKDAERGKLKRRAIATPGMQIRGFVYFVETLARNICEKLEQSGLPVGGNEKKAKLANVVRKMMTNSQDTELSFTITGDNTKWNENQNPRMFLAMITYITRNQPEWFRNVLSIAPIMFSNKMARLGKGYMFESKSMKLRTQIPAEMLASIDLKYFNESTRKKIEKIRPLLIDGTASLSPGMMMGMFNMLSTVLGVSILNLGQKKYTKTTYWWDGLQSSDDFALIVNAPSHEGIQAGVNRFYRTCKLVGINMSKKKSYINRTGTFEFTSFFYRYGFVANFSMELPSFGVSGINESADMSIGVTVIKNNMINNDLGPATAQMALQLFIKDYRYTYRCHRGDTQIQTRRSFELKKLWEQTRSKAGLLVSDGGSNLYNIRNLHIPEVCLKWELMDEDYQGRLCNPLNPFVSHKEIESVNNAVVMPAHGPAKSMEYDAVATTHSWTPKRNRSILNTSQRGILEDEQMYQKCCNLFEKFFPSSSYRRPVGISSMVEAMVSRARIDARIDFESGRIKKEEFAEIMKICSTIEELRRQK</sequence>
<keyword id="KW-1262">Eukaryotic host gene expression shutoff by virus</keyword>
<keyword id="KW-1191">Eukaryotic host transcription shutoff by virus</keyword>
<keyword id="KW-1035">Host cytoplasm</keyword>
<keyword id="KW-1190">Host gene expression shutoff by virus</keyword>
<keyword id="KW-1048">Host nucleus</keyword>
<keyword id="KW-0945">Host-virus interaction</keyword>
<keyword id="KW-1104">Inhibition of host RNA polymerase II by virus</keyword>
<keyword id="KW-0547">Nucleotide-binding</keyword>
<keyword id="KW-0548">Nucleotidyltransferase</keyword>
<keyword id="KW-0597">Phosphoprotein</keyword>
<keyword id="KW-0696">RNA-directed RNA polymerase</keyword>
<keyword id="KW-0808">Transferase</keyword>
<keyword id="KW-0693">Viral RNA replication</keyword>
<keyword id="KW-1195">Viral transcription</keyword>
<name>RDRP_I67A0</name>
<proteinExistence type="inferred from homology"/>
<evidence type="ECO:0000255" key="1">
    <source>
        <dbReference type="HAMAP-Rule" id="MF_04065"/>
    </source>
</evidence>
<evidence type="ECO:0000256" key="2">
    <source>
        <dbReference type="SAM" id="MobiDB-lite"/>
    </source>
</evidence>
<gene>
    <name evidence="1" type="primary">PB1</name>
</gene>
<comment type="function">
    <text evidence="1">RNA-dependent RNA polymerase which is responsible for replication and transcription of virus RNA segments. The transcription of viral mRNAs occurs by a unique mechanism called cap-snatching. 5' methylated caps of cellular mRNAs are cleaved after 10-13 nucleotides by PA. In turn, these short capped RNAs are used as primers by PB1 for transcription of viral mRNAs. During virus replication, PB1 initiates RNA synthesis and copy vRNA into complementary RNA (cRNA) which in turn serves as a template for the production of more vRNAs.</text>
</comment>
<comment type="catalytic activity">
    <reaction evidence="1">
        <text>RNA(n) + a ribonucleoside 5'-triphosphate = RNA(n+1) + diphosphate</text>
        <dbReference type="Rhea" id="RHEA:21248"/>
        <dbReference type="Rhea" id="RHEA-COMP:14527"/>
        <dbReference type="Rhea" id="RHEA-COMP:17342"/>
        <dbReference type="ChEBI" id="CHEBI:33019"/>
        <dbReference type="ChEBI" id="CHEBI:61557"/>
        <dbReference type="ChEBI" id="CHEBI:140395"/>
        <dbReference type="EC" id="2.7.7.48"/>
    </reaction>
</comment>
<comment type="subunit">
    <text evidence="1">Influenza RNA polymerase is composed of three subunits: PB1, PB2 and PA. Interacts (via N-terminus) with PA (via C-terminus). Interacts (via C-terminus) with PB2 (via N-terminus); this interaction is essential for transcription initiation.</text>
</comment>
<comment type="subcellular location">
    <subcellularLocation>
        <location evidence="1">Host nucleus</location>
    </subcellularLocation>
    <subcellularLocation>
        <location evidence="1">Host cytoplasm</location>
    </subcellularLocation>
</comment>
<comment type="PTM">
    <text evidence="1">Phosphorylated by host PRKCA.</text>
</comment>
<comment type="similarity">
    <text evidence="1">Belongs to the influenza viruses polymerase PB1 family.</text>
</comment>